<reference key="1">
    <citation type="journal article" date="2005" name="Nature">
        <title>The map-based sequence of the rice genome.</title>
        <authorList>
            <consortium name="International rice genome sequencing project (IRGSP)"/>
        </authorList>
    </citation>
    <scope>NUCLEOTIDE SEQUENCE [LARGE SCALE GENOMIC DNA]</scope>
    <source>
        <strain>cv. Nipponbare</strain>
    </source>
</reference>
<reference key="2">
    <citation type="journal article" date="2008" name="Nucleic Acids Res.">
        <title>The rice annotation project database (RAP-DB): 2008 update.</title>
        <authorList>
            <consortium name="The rice annotation project (RAP)"/>
        </authorList>
    </citation>
    <scope>GENOME REANNOTATION</scope>
    <source>
        <strain>cv. Nipponbare</strain>
    </source>
</reference>
<reference key="3">
    <citation type="journal article" date="2013" name="Rice">
        <title>Improvement of the Oryza sativa Nipponbare reference genome using next generation sequence and optical map data.</title>
        <authorList>
            <person name="Kawahara Y."/>
            <person name="de la Bastide M."/>
            <person name="Hamilton J.P."/>
            <person name="Kanamori H."/>
            <person name="McCombie W.R."/>
            <person name="Ouyang S."/>
            <person name="Schwartz D.C."/>
            <person name="Tanaka T."/>
            <person name="Wu J."/>
            <person name="Zhou S."/>
            <person name="Childs K.L."/>
            <person name="Davidson R.M."/>
            <person name="Lin H."/>
            <person name="Quesada-Ocampo L."/>
            <person name="Vaillancourt B."/>
            <person name="Sakai H."/>
            <person name="Lee S.S."/>
            <person name="Kim J."/>
            <person name="Numa H."/>
            <person name="Itoh T."/>
            <person name="Buell C.R."/>
            <person name="Matsumoto T."/>
        </authorList>
    </citation>
    <scope>GENOME REANNOTATION</scope>
    <source>
        <strain>cv. Nipponbare</strain>
    </source>
</reference>
<reference key="4">
    <citation type="journal article" date="2008" name="BMC Genomics">
        <title>Genome-wide analysis of CCCH zinc finger family in Arabidopsis and rice.</title>
        <authorList>
            <person name="Wang D."/>
            <person name="Guo Y."/>
            <person name="Wu C."/>
            <person name="Yang G."/>
            <person name="Li Y."/>
            <person name="Zheng C."/>
        </authorList>
    </citation>
    <scope>NOMENCLATURE</scope>
</reference>
<accession>Q84UQ3</accession>
<accession>A0A0P0XC61</accession>
<evidence type="ECO:0000255" key="1">
    <source>
        <dbReference type="PROSITE-ProRule" id="PRU00723"/>
    </source>
</evidence>
<evidence type="ECO:0000256" key="2">
    <source>
        <dbReference type="SAM" id="MobiDB-lite"/>
    </source>
</evidence>
<feature type="chain" id="PRO_0000346849" description="Zinc finger CCCH domain-containing protein 56">
    <location>
        <begin position="1"/>
        <end position="367"/>
    </location>
</feature>
<feature type="zinc finger region" description="C3H1-type 1" evidence="1">
    <location>
        <begin position="87"/>
        <end position="114"/>
    </location>
</feature>
<feature type="zinc finger region" description="C3H1-type 2" evidence="1">
    <location>
        <begin position="169"/>
        <end position="197"/>
    </location>
</feature>
<feature type="zinc finger region" description="C3H1-type 3" evidence="1">
    <location>
        <begin position="245"/>
        <end position="273"/>
    </location>
</feature>
<feature type="region of interest" description="Disordered" evidence="2">
    <location>
        <begin position="38"/>
        <end position="80"/>
    </location>
</feature>
<feature type="compositionally biased region" description="Gly residues" evidence="2">
    <location>
        <begin position="67"/>
        <end position="76"/>
    </location>
</feature>
<sequence length="367" mass="37958">MDYTNAIHIIPDAAGPDAWANAAAQGGDAGIWATEDDYNSQWNADGGGGGSSRAGSEQPPPGKKSRGGGGGEGGGNTSKSRAIGKMFFKTKLCCKFRAGTCPYVTNCNFAHGMEELRKPPPNWQEIVAAHEEATEAREEHQIPIMTSSGPTAGGDAGCGGGGGGGSGRAYKGRHCKKFYTDEGCPYGDACTFLHDEQSKARESVAISLSPSVGGGGGGGSYNSAAAAAASASAAAGNGPMQKPSNWKTRICNKWEMTGYCPFGSKCHFAHGAAELHKYGGGLVDIDSRDAAATPDSKQAVVSAKAPAETAAASTTVLPHADVYHLGVQAQRSTIAGQRSGQVQRPIQKWKGPDKISRIYGDWIDETE</sequence>
<dbReference type="EMBL" id="AP004635">
    <property type="protein sequence ID" value="BAC66728.1"/>
    <property type="molecule type" value="Genomic_DNA"/>
</dbReference>
<dbReference type="EMBL" id="AP004698">
    <property type="protein sequence ID" value="BAC99662.1"/>
    <property type="molecule type" value="Genomic_DNA"/>
</dbReference>
<dbReference type="EMBL" id="AP008214">
    <property type="protein sequence ID" value="BAF22958.1"/>
    <property type="molecule type" value="Genomic_DNA"/>
</dbReference>
<dbReference type="EMBL" id="AP014964">
    <property type="protein sequence ID" value="BAT03925.1"/>
    <property type="molecule type" value="Genomic_DNA"/>
</dbReference>
<dbReference type="RefSeq" id="XP_015648128.1">
    <property type="nucleotide sequence ID" value="XM_015792642.1"/>
</dbReference>
<dbReference type="FunCoup" id="Q84UQ3">
    <property type="interactions" value="1959"/>
</dbReference>
<dbReference type="STRING" id="39947.Q84UQ3"/>
<dbReference type="PaxDb" id="39947-Q84UQ3"/>
<dbReference type="EnsemblPlants" id="Os08t0159800-00">
    <property type="protein sequence ID" value="Os08t0159800-00"/>
    <property type="gene ID" value="Os08g0159800"/>
</dbReference>
<dbReference type="Gramene" id="Os08t0159800-00">
    <property type="protein sequence ID" value="Os08t0159800-00"/>
    <property type="gene ID" value="Os08g0159800"/>
</dbReference>
<dbReference type="KEGG" id="dosa:Os08g0159800"/>
<dbReference type="KEGG" id="osa:4344715"/>
<dbReference type="eggNOG" id="KOG1677">
    <property type="taxonomic scope" value="Eukaryota"/>
</dbReference>
<dbReference type="HOGENOM" id="CLU_060653_1_0_1"/>
<dbReference type="InParanoid" id="Q84UQ3"/>
<dbReference type="OMA" id="EMWATEE"/>
<dbReference type="OrthoDB" id="410307at2759"/>
<dbReference type="Proteomes" id="UP000000763">
    <property type="component" value="Chromosome 8"/>
</dbReference>
<dbReference type="Proteomes" id="UP000059680">
    <property type="component" value="Chromosome 8"/>
</dbReference>
<dbReference type="GO" id="GO:0003677">
    <property type="term" value="F:DNA binding"/>
    <property type="evidence" value="ECO:0007669"/>
    <property type="project" value="UniProtKB-KW"/>
</dbReference>
<dbReference type="GO" id="GO:0003729">
    <property type="term" value="F:mRNA binding"/>
    <property type="evidence" value="ECO:0007669"/>
    <property type="project" value="InterPro"/>
</dbReference>
<dbReference type="GO" id="GO:0008270">
    <property type="term" value="F:zinc ion binding"/>
    <property type="evidence" value="ECO:0007669"/>
    <property type="project" value="UniProtKB-KW"/>
</dbReference>
<dbReference type="FunFam" id="4.10.1000.10:FF:000016">
    <property type="entry name" value="Zinc finger CCCH domain-containing protein"/>
    <property type="match status" value="1"/>
</dbReference>
<dbReference type="FunFam" id="4.10.1000.10:FF:000001">
    <property type="entry name" value="zinc finger CCCH domain-containing protein 15-like"/>
    <property type="match status" value="1"/>
</dbReference>
<dbReference type="FunFam" id="4.10.1000.10:FF:000045">
    <property type="entry name" value="Zinc finger, CCCH-type"/>
    <property type="match status" value="1"/>
</dbReference>
<dbReference type="Gene3D" id="4.10.1000.10">
    <property type="entry name" value="Zinc finger, CCCH-type"/>
    <property type="match status" value="3"/>
</dbReference>
<dbReference type="InterPro" id="IPR045877">
    <property type="entry name" value="ZFP36-like"/>
</dbReference>
<dbReference type="InterPro" id="IPR041367">
    <property type="entry name" value="Znf-CCCH_4"/>
</dbReference>
<dbReference type="InterPro" id="IPR000571">
    <property type="entry name" value="Znf_CCCH"/>
</dbReference>
<dbReference type="InterPro" id="IPR036855">
    <property type="entry name" value="Znf_CCCH_sf"/>
</dbReference>
<dbReference type="PANTHER" id="PTHR12547">
    <property type="entry name" value="CCCH ZINC FINGER/TIS11-RELATED"/>
    <property type="match status" value="1"/>
</dbReference>
<dbReference type="Pfam" id="PF00642">
    <property type="entry name" value="zf-CCCH"/>
    <property type="match status" value="2"/>
</dbReference>
<dbReference type="Pfam" id="PF18044">
    <property type="entry name" value="zf-CCCH_4"/>
    <property type="match status" value="1"/>
</dbReference>
<dbReference type="SMART" id="SM00356">
    <property type="entry name" value="ZnF_C3H1"/>
    <property type="match status" value="3"/>
</dbReference>
<dbReference type="SUPFAM" id="SSF90229">
    <property type="entry name" value="CCCH zinc finger"/>
    <property type="match status" value="3"/>
</dbReference>
<dbReference type="PROSITE" id="PS50103">
    <property type="entry name" value="ZF_C3H1"/>
    <property type="match status" value="3"/>
</dbReference>
<organism>
    <name type="scientific">Oryza sativa subsp. japonica</name>
    <name type="common">Rice</name>
    <dbReference type="NCBI Taxonomy" id="39947"/>
    <lineage>
        <taxon>Eukaryota</taxon>
        <taxon>Viridiplantae</taxon>
        <taxon>Streptophyta</taxon>
        <taxon>Embryophyta</taxon>
        <taxon>Tracheophyta</taxon>
        <taxon>Spermatophyta</taxon>
        <taxon>Magnoliopsida</taxon>
        <taxon>Liliopsida</taxon>
        <taxon>Poales</taxon>
        <taxon>Poaceae</taxon>
        <taxon>BOP clade</taxon>
        <taxon>Oryzoideae</taxon>
        <taxon>Oryzeae</taxon>
        <taxon>Oryzinae</taxon>
        <taxon>Oryza</taxon>
        <taxon>Oryza sativa</taxon>
    </lineage>
</organism>
<gene>
    <name type="ordered locus">Os08g0159800</name>
    <name type="ordered locus">LOC_Os08g06330</name>
    <name type="ORF">P0498E12.129</name>
    <name type="ORF">P0672D01.112</name>
</gene>
<proteinExistence type="predicted"/>
<name>C3H56_ORYSJ</name>
<keyword id="KW-0238">DNA-binding</keyword>
<keyword id="KW-0479">Metal-binding</keyword>
<keyword id="KW-1185">Reference proteome</keyword>
<keyword id="KW-0677">Repeat</keyword>
<keyword id="KW-0862">Zinc</keyword>
<keyword id="KW-0863">Zinc-finger</keyword>
<protein>
    <recommendedName>
        <fullName>Zinc finger CCCH domain-containing protein 56</fullName>
        <shortName>OsC3H56</shortName>
    </recommendedName>
</protein>